<feature type="chain" id="PRO_0000253252" description="Putative FNIP repeat-containing protein L415">
    <location>
        <begin position="1"/>
        <end position="415"/>
    </location>
</feature>
<feature type="repeat" description="FNIP">
    <location>
        <begin position="148"/>
        <end position="185"/>
    </location>
</feature>
<organism>
    <name type="scientific">Acanthamoeba polyphaga mimivirus</name>
    <name type="common">APMV</name>
    <dbReference type="NCBI Taxonomy" id="212035"/>
    <lineage>
        <taxon>Viruses</taxon>
        <taxon>Varidnaviria</taxon>
        <taxon>Bamfordvirae</taxon>
        <taxon>Nucleocytoviricota</taxon>
        <taxon>Megaviricetes</taxon>
        <taxon>Imitervirales</taxon>
        <taxon>Mimiviridae</taxon>
        <taxon>Megamimivirinae</taxon>
        <taxon>Mimivirus</taxon>
        <taxon>Mimivirus bradfordmassiliense</taxon>
    </lineage>
</organism>
<proteinExistence type="predicted"/>
<organismHost>
    <name type="scientific">Acanthamoeba polyphaga</name>
    <name type="common">Amoeba</name>
    <dbReference type="NCBI Taxonomy" id="5757"/>
</organismHost>
<name>YL415_MIMIV</name>
<accession>Q5UQL6</accession>
<keyword id="KW-1185">Reference proteome</keyword>
<dbReference type="EMBL" id="AY653733">
    <property type="protein sequence ID" value="AAV50684.1"/>
    <property type="molecule type" value="Genomic_DNA"/>
</dbReference>
<dbReference type="SMR" id="Q5UQL6"/>
<dbReference type="KEGG" id="vg:9925036"/>
<dbReference type="Proteomes" id="UP000001134">
    <property type="component" value="Genome"/>
</dbReference>
<dbReference type="InterPro" id="IPR008615">
    <property type="entry name" value="FNIP"/>
</dbReference>
<dbReference type="InterPro" id="IPR051251">
    <property type="entry name" value="STK_FNIP-Repeat"/>
</dbReference>
<dbReference type="PANTHER" id="PTHR32134">
    <property type="entry name" value="FNIP REPEAT-CONTAINING PROTEIN"/>
    <property type="match status" value="1"/>
</dbReference>
<dbReference type="PANTHER" id="PTHR32134:SF169">
    <property type="entry name" value="FNIP REPEAT-CONTAINING PROTEIN-RELATED"/>
    <property type="match status" value="1"/>
</dbReference>
<dbReference type="Pfam" id="PF05725">
    <property type="entry name" value="FNIP"/>
    <property type="match status" value="1"/>
</dbReference>
<protein>
    <recommendedName>
        <fullName>Putative FNIP repeat-containing protein L415</fullName>
    </recommendedName>
</protein>
<sequence length="415" mass="48384">MNIVEMLCTDVIVYMMDYLSDIDKINFLKTCSSFYNHRFCVKFNDFHSFDKIRDLDYSENFKRIVFTKTKNNVKSFTLNNSYDRIPIDAKHLIIGKLFKLSLENIIPRGITHLTIEEEYGSEINPGIINPEEIPDIVTYLNIKSRNIFIKKGAIPDSVTHLYFGSDYLSKDIIPKNVVYLRFGDFSRCVIGQRLVETRQVNDITVTTTRIESYIPESVACLHLGFSMSNKCLGERIIETQEMDGEKINTTKIVSYIPKNVTCLTIFNEVYKNTFDFIPKNVTKLNLFGEIMEMIDETIIPKNITTLGLACYRDLNKIKIPKKVTRLNFLFEEYMSNPKVLDIPEHITTISLKYTHDIFKKVVFNNILNLKIDSYYFEKKLYLPNSIKTLTIYGNYDKKVIKKLPNTINTLIFKHK</sequence>
<gene>
    <name type="ordered locus">MIMI_L415</name>
</gene>
<reference key="1">
    <citation type="journal article" date="2004" name="Science">
        <title>The 1.2-megabase genome sequence of Mimivirus.</title>
        <authorList>
            <person name="Raoult D."/>
            <person name="Audic S."/>
            <person name="Robert C."/>
            <person name="Abergel C."/>
            <person name="Renesto P."/>
            <person name="Ogata H."/>
            <person name="La Scola B."/>
            <person name="Susan M."/>
            <person name="Claverie J.-M."/>
        </authorList>
    </citation>
    <scope>NUCLEOTIDE SEQUENCE [LARGE SCALE GENOMIC DNA]</scope>
    <source>
        <strain>Rowbotham-Bradford</strain>
    </source>
</reference>